<feature type="chain" id="PRO_1000066635" description="Acyl carrier protein">
    <location>
        <begin position="1"/>
        <end position="78"/>
    </location>
</feature>
<feature type="domain" description="Carrier" evidence="2">
    <location>
        <begin position="2"/>
        <end position="77"/>
    </location>
</feature>
<feature type="modified residue" description="O-(pantetheine 4'-phosphoryl)serine" evidence="2">
    <location>
        <position position="37"/>
    </location>
</feature>
<keyword id="KW-0963">Cytoplasm</keyword>
<keyword id="KW-0275">Fatty acid biosynthesis</keyword>
<keyword id="KW-0276">Fatty acid metabolism</keyword>
<keyword id="KW-0444">Lipid biosynthesis</keyword>
<keyword id="KW-0443">Lipid metabolism</keyword>
<keyword id="KW-0596">Phosphopantetheine</keyword>
<keyword id="KW-0597">Phosphoprotein</keyword>
<keyword id="KW-1185">Reference proteome</keyword>
<evidence type="ECO:0000255" key="1">
    <source>
        <dbReference type="HAMAP-Rule" id="MF_01217"/>
    </source>
</evidence>
<evidence type="ECO:0000255" key="2">
    <source>
        <dbReference type="PROSITE-ProRule" id="PRU00258"/>
    </source>
</evidence>
<dbReference type="EMBL" id="CP000471">
    <property type="protein sequence ID" value="ABK44381.1"/>
    <property type="molecule type" value="Genomic_DNA"/>
</dbReference>
<dbReference type="RefSeq" id="WP_011713525.1">
    <property type="nucleotide sequence ID" value="NC_008576.1"/>
</dbReference>
<dbReference type="SMR" id="A0L8T8"/>
<dbReference type="STRING" id="156889.Mmc1_1873"/>
<dbReference type="KEGG" id="mgm:Mmc1_1873"/>
<dbReference type="eggNOG" id="COG0236">
    <property type="taxonomic scope" value="Bacteria"/>
</dbReference>
<dbReference type="HOGENOM" id="CLU_108696_5_1_5"/>
<dbReference type="OrthoDB" id="9804551at2"/>
<dbReference type="UniPathway" id="UPA00094"/>
<dbReference type="Proteomes" id="UP000002586">
    <property type="component" value="Chromosome"/>
</dbReference>
<dbReference type="GO" id="GO:0005829">
    <property type="term" value="C:cytosol"/>
    <property type="evidence" value="ECO:0007669"/>
    <property type="project" value="TreeGrafter"/>
</dbReference>
<dbReference type="GO" id="GO:0016020">
    <property type="term" value="C:membrane"/>
    <property type="evidence" value="ECO:0007669"/>
    <property type="project" value="GOC"/>
</dbReference>
<dbReference type="GO" id="GO:0000035">
    <property type="term" value="F:acyl binding"/>
    <property type="evidence" value="ECO:0007669"/>
    <property type="project" value="TreeGrafter"/>
</dbReference>
<dbReference type="GO" id="GO:0000036">
    <property type="term" value="F:acyl carrier activity"/>
    <property type="evidence" value="ECO:0007669"/>
    <property type="project" value="UniProtKB-UniRule"/>
</dbReference>
<dbReference type="GO" id="GO:0009245">
    <property type="term" value="P:lipid A biosynthetic process"/>
    <property type="evidence" value="ECO:0007669"/>
    <property type="project" value="TreeGrafter"/>
</dbReference>
<dbReference type="FunFam" id="1.10.1200.10:FF:000001">
    <property type="entry name" value="Acyl carrier protein"/>
    <property type="match status" value="1"/>
</dbReference>
<dbReference type="Gene3D" id="1.10.1200.10">
    <property type="entry name" value="ACP-like"/>
    <property type="match status" value="1"/>
</dbReference>
<dbReference type="HAMAP" id="MF_01217">
    <property type="entry name" value="Acyl_carrier"/>
    <property type="match status" value="1"/>
</dbReference>
<dbReference type="InterPro" id="IPR003231">
    <property type="entry name" value="ACP"/>
</dbReference>
<dbReference type="InterPro" id="IPR036736">
    <property type="entry name" value="ACP-like_sf"/>
</dbReference>
<dbReference type="InterPro" id="IPR009081">
    <property type="entry name" value="PP-bd_ACP"/>
</dbReference>
<dbReference type="NCBIfam" id="TIGR00517">
    <property type="entry name" value="acyl_carrier"/>
    <property type="match status" value="1"/>
</dbReference>
<dbReference type="NCBIfam" id="NF002148">
    <property type="entry name" value="PRK00982.1-2"/>
    <property type="match status" value="1"/>
</dbReference>
<dbReference type="NCBIfam" id="NF002149">
    <property type="entry name" value="PRK00982.1-3"/>
    <property type="match status" value="1"/>
</dbReference>
<dbReference type="NCBIfam" id="NF002150">
    <property type="entry name" value="PRK00982.1-4"/>
    <property type="match status" value="1"/>
</dbReference>
<dbReference type="NCBIfam" id="NF002151">
    <property type="entry name" value="PRK00982.1-5"/>
    <property type="match status" value="1"/>
</dbReference>
<dbReference type="PANTHER" id="PTHR20863">
    <property type="entry name" value="ACYL CARRIER PROTEIN"/>
    <property type="match status" value="1"/>
</dbReference>
<dbReference type="PANTHER" id="PTHR20863:SF76">
    <property type="entry name" value="CARRIER DOMAIN-CONTAINING PROTEIN"/>
    <property type="match status" value="1"/>
</dbReference>
<dbReference type="Pfam" id="PF00550">
    <property type="entry name" value="PP-binding"/>
    <property type="match status" value="1"/>
</dbReference>
<dbReference type="SUPFAM" id="SSF47336">
    <property type="entry name" value="ACP-like"/>
    <property type="match status" value="1"/>
</dbReference>
<dbReference type="PROSITE" id="PS50075">
    <property type="entry name" value="CARRIER"/>
    <property type="match status" value="1"/>
</dbReference>
<protein>
    <recommendedName>
        <fullName evidence="1">Acyl carrier protein</fullName>
        <shortName evidence="1">ACP</shortName>
    </recommendedName>
</protein>
<proteinExistence type="inferred from homology"/>
<organism>
    <name type="scientific">Magnetococcus marinus (strain ATCC BAA-1437 / JCM 17883 / MC-1)</name>
    <dbReference type="NCBI Taxonomy" id="156889"/>
    <lineage>
        <taxon>Bacteria</taxon>
        <taxon>Pseudomonadati</taxon>
        <taxon>Pseudomonadota</taxon>
        <taxon>Alphaproteobacteria</taxon>
        <taxon>Magnetococcales</taxon>
        <taxon>Magnetococcaceae</taxon>
        <taxon>Magnetococcus</taxon>
    </lineage>
</organism>
<sequence length="78" mass="8632">MSDIAERVKKIVAEQMGVDLDKVTDDAKFVEDLGADSLDNVELVMAFEEEFGCEIPDETAEKITSVSDAIKYIGENME</sequence>
<name>ACP_MAGMM</name>
<reference key="1">
    <citation type="journal article" date="2009" name="Appl. Environ. Microbiol.">
        <title>Complete genome sequence of the chemolithoautotrophic marine magnetotactic coccus strain MC-1.</title>
        <authorList>
            <person name="Schubbe S."/>
            <person name="Williams T.J."/>
            <person name="Xie G."/>
            <person name="Kiss H.E."/>
            <person name="Brettin T.S."/>
            <person name="Martinez D."/>
            <person name="Ross C.A."/>
            <person name="Schuler D."/>
            <person name="Cox B.L."/>
            <person name="Nealson K.H."/>
            <person name="Bazylinski D.A."/>
        </authorList>
    </citation>
    <scope>NUCLEOTIDE SEQUENCE [LARGE SCALE GENOMIC DNA]</scope>
    <source>
        <strain>ATCC BAA-1437 / JCM 17883 / MC-1</strain>
    </source>
</reference>
<accession>A0L8T8</accession>
<comment type="function">
    <text evidence="1">Carrier of the growing fatty acid chain in fatty acid biosynthesis.</text>
</comment>
<comment type="pathway">
    <text evidence="1">Lipid metabolism; fatty acid biosynthesis.</text>
</comment>
<comment type="subcellular location">
    <subcellularLocation>
        <location evidence="1">Cytoplasm</location>
    </subcellularLocation>
</comment>
<comment type="PTM">
    <text evidence="1">4'-phosphopantetheine is transferred from CoA to a specific serine of apo-ACP by AcpS. This modification is essential for activity because fatty acids are bound in thioester linkage to the sulfhydryl of the prosthetic group.</text>
</comment>
<comment type="similarity">
    <text evidence="1">Belongs to the acyl carrier protein (ACP) family.</text>
</comment>
<gene>
    <name evidence="1" type="primary">acpP</name>
    <name type="ordered locus">Mmc1_1873</name>
</gene>